<organism>
    <name type="scientific">Staphylococcus aureus (strain JH9)</name>
    <dbReference type="NCBI Taxonomy" id="359786"/>
    <lineage>
        <taxon>Bacteria</taxon>
        <taxon>Bacillati</taxon>
        <taxon>Bacillota</taxon>
        <taxon>Bacilli</taxon>
        <taxon>Bacillales</taxon>
        <taxon>Staphylococcaceae</taxon>
        <taxon>Staphylococcus</taxon>
    </lineage>
</organism>
<dbReference type="EMBL" id="CP000703">
    <property type="protein sequence ID" value="ABQ50097.1"/>
    <property type="molecule type" value="Genomic_DNA"/>
</dbReference>
<dbReference type="RefSeq" id="WP_000002973.1">
    <property type="nucleotide sequence ID" value="NC_009487.1"/>
</dbReference>
<dbReference type="SMR" id="A5IV74"/>
<dbReference type="KEGG" id="saj:SaurJH9_2317"/>
<dbReference type="HOGENOM" id="CLU_072144_1_0_9"/>
<dbReference type="GO" id="GO:0005737">
    <property type="term" value="C:cytoplasm"/>
    <property type="evidence" value="ECO:0007669"/>
    <property type="project" value="UniProtKB-SubCell"/>
</dbReference>
<dbReference type="GO" id="GO:0005525">
    <property type="term" value="F:GTP binding"/>
    <property type="evidence" value="ECO:0007669"/>
    <property type="project" value="UniProtKB-KW"/>
</dbReference>
<dbReference type="GO" id="GO:0003924">
    <property type="term" value="F:GTPase activity"/>
    <property type="evidence" value="ECO:0007669"/>
    <property type="project" value="InterPro"/>
</dbReference>
<dbReference type="GO" id="GO:0016151">
    <property type="term" value="F:nickel cation binding"/>
    <property type="evidence" value="ECO:0007669"/>
    <property type="project" value="UniProtKB-UniRule"/>
</dbReference>
<dbReference type="GO" id="GO:0043419">
    <property type="term" value="P:urea catabolic process"/>
    <property type="evidence" value="ECO:0007669"/>
    <property type="project" value="InterPro"/>
</dbReference>
<dbReference type="CDD" id="cd05540">
    <property type="entry name" value="UreG"/>
    <property type="match status" value="1"/>
</dbReference>
<dbReference type="Gene3D" id="3.40.50.300">
    <property type="entry name" value="P-loop containing nucleotide triphosphate hydrolases"/>
    <property type="match status" value="1"/>
</dbReference>
<dbReference type="HAMAP" id="MF_01389">
    <property type="entry name" value="UreG"/>
    <property type="match status" value="1"/>
</dbReference>
<dbReference type="InterPro" id="IPR003495">
    <property type="entry name" value="CobW/HypB/UreG_nucleotide-bd"/>
</dbReference>
<dbReference type="InterPro" id="IPR027417">
    <property type="entry name" value="P-loop_NTPase"/>
</dbReference>
<dbReference type="InterPro" id="IPR004400">
    <property type="entry name" value="UreG"/>
</dbReference>
<dbReference type="NCBIfam" id="TIGR00101">
    <property type="entry name" value="ureG"/>
    <property type="match status" value="1"/>
</dbReference>
<dbReference type="PANTHER" id="PTHR31715">
    <property type="entry name" value="UREASE ACCESSORY PROTEIN G"/>
    <property type="match status" value="1"/>
</dbReference>
<dbReference type="PANTHER" id="PTHR31715:SF0">
    <property type="entry name" value="UREASE ACCESSORY PROTEIN G"/>
    <property type="match status" value="1"/>
</dbReference>
<dbReference type="Pfam" id="PF02492">
    <property type="entry name" value="cobW"/>
    <property type="match status" value="1"/>
</dbReference>
<dbReference type="PIRSF" id="PIRSF005624">
    <property type="entry name" value="Ni-bind_GTPase"/>
    <property type="match status" value="1"/>
</dbReference>
<dbReference type="SUPFAM" id="SSF52540">
    <property type="entry name" value="P-loop containing nucleoside triphosphate hydrolases"/>
    <property type="match status" value="1"/>
</dbReference>
<proteinExistence type="inferred from homology"/>
<gene>
    <name evidence="1" type="primary">ureG</name>
    <name type="ordered locus">SaurJH9_2317</name>
</gene>
<feature type="chain" id="PRO_1000145226" description="Urease accessory protein UreG">
    <location>
        <begin position="1"/>
        <end position="204"/>
    </location>
</feature>
<feature type="binding site" evidence="1">
    <location>
        <begin position="11"/>
        <end position="18"/>
    </location>
    <ligand>
        <name>GTP</name>
        <dbReference type="ChEBI" id="CHEBI:37565"/>
    </ligand>
</feature>
<sequence>MANPIKIGIGGPVGAGKTQLIEKVVKRLSKEMSIGVITNDIYTKEDEKILVNSGVLPESRIIGVETGGCPHTAIREDASMNFAAIDELLERHDDIELIFIESGGDNLAATFSPELVDFSIYIIDVAQGEKIPRKGGQGMIKSDFFVINKTDLAPYVGASLEQMAEDTKVFRGKRPFTFTNLKTDEGLDEVIDWIERDTLLKGLS</sequence>
<comment type="function">
    <text evidence="1">Facilitates the functional incorporation of the urease nickel metallocenter. This process requires GTP hydrolysis, probably effectuated by UreG.</text>
</comment>
<comment type="subunit">
    <text evidence="1">Homodimer. UreD, UreF and UreG form a complex that acts as a GTP-hydrolysis-dependent molecular chaperone, activating the urease apoprotein by helping to assemble the nickel containing metallocenter of UreC. The UreE protein probably delivers the nickel.</text>
</comment>
<comment type="subcellular location">
    <subcellularLocation>
        <location evidence="1">Cytoplasm</location>
    </subcellularLocation>
</comment>
<comment type="similarity">
    <text evidence="1">Belongs to the SIMIBI class G3E GTPase family. UreG subfamily.</text>
</comment>
<keyword id="KW-0143">Chaperone</keyword>
<keyword id="KW-0963">Cytoplasm</keyword>
<keyword id="KW-0342">GTP-binding</keyword>
<keyword id="KW-0996">Nickel insertion</keyword>
<keyword id="KW-0547">Nucleotide-binding</keyword>
<reference key="1">
    <citation type="submission" date="2007-05" db="EMBL/GenBank/DDBJ databases">
        <title>Complete sequence of chromosome of Staphylococcus aureus subsp. aureus JH9.</title>
        <authorList>
            <consortium name="US DOE Joint Genome Institute"/>
            <person name="Copeland A."/>
            <person name="Lucas S."/>
            <person name="Lapidus A."/>
            <person name="Barry K."/>
            <person name="Detter J.C."/>
            <person name="Glavina del Rio T."/>
            <person name="Hammon N."/>
            <person name="Israni S."/>
            <person name="Pitluck S."/>
            <person name="Chain P."/>
            <person name="Malfatti S."/>
            <person name="Shin M."/>
            <person name="Vergez L."/>
            <person name="Schmutz J."/>
            <person name="Larimer F."/>
            <person name="Land M."/>
            <person name="Hauser L."/>
            <person name="Kyrpides N."/>
            <person name="Kim E."/>
            <person name="Tomasz A."/>
            <person name="Richardson P."/>
        </authorList>
    </citation>
    <scope>NUCLEOTIDE SEQUENCE [LARGE SCALE GENOMIC DNA]</scope>
    <source>
        <strain>JH9</strain>
    </source>
</reference>
<protein>
    <recommendedName>
        <fullName evidence="1">Urease accessory protein UreG</fullName>
    </recommendedName>
</protein>
<evidence type="ECO:0000255" key="1">
    <source>
        <dbReference type="HAMAP-Rule" id="MF_01389"/>
    </source>
</evidence>
<accession>A5IV74</accession>
<name>UREG_STAA9</name>